<comment type="function">
    <text evidence="1">Converts holo-ACP to apo-ACP by hydrolytic cleavage of the phosphopantetheine prosthetic group from ACP.</text>
</comment>
<comment type="catalytic activity">
    <reaction evidence="1">
        <text>holo-[ACP] + H2O = apo-[ACP] + (R)-4'-phosphopantetheine + H(+)</text>
        <dbReference type="Rhea" id="RHEA:20537"/>
        <dbReference type="Rhea" id="RHEA-COMP:9685"/>
        <dbReference type="Rhea" id="RHEA-COMP:9690"/>
        <dbReference type="ChEBI" id="CHEBI:15377"/>
        <dbReference type="ChEBI" id="CHEBI:15378"/>
        <dbReference type="ChEBI" id="CHEBI:29999"/>
        <dbReference type="ChEBI" id="CHEBI:61723"/>
        <dbReference type="ChEBI" id="CHEBI:64479"/>
        <dbReference type="EC" id="3.1.4.14"/>
    </reaction>
</comment>
<comment type="similarity">
    <text evidence="1">Belongs to the AcpH family.</text>
</comment>
<keyword id="KW-0275">Fatty acid biosynthesis</keyword>
<keyword id="KW-0276">Fatty acid metabolism</keyword>
<keyword id="KW-0378">Hydrolase</keyword>
<keyword id="KW-0444">Lipid biosynthesis</keyword>
<keyword id="KW-0443">Lipid metabolism</keyword>
<dbReference type="EC" id="3.1.4.14" evidence="1"/>
<dbReference type="EMBL" id="AM933172">
    <property type="protein sequence ID" value="CAR31972.1"/>
    <property type="molecule type" value="Genomic_DNA"/>
</dbReference>
<dbReference type="RefSeq" id="WP_001009858.1">
    <property type="nucleotide sequence ID" value="NC_011294.1"/>
</dbReference>
<dbReference type="SMR" id="B5QTF2"/>
<dbReference type="KEGG" id="set:SEN0386"/>
<dbReference type="HOGENOM" id="CLU_099370_1_0_6"/>
<dbReference type="Proteomes" id="UP000000613">
    <property type="component" value="Chromosome"/>
</dbReference>
<dbReference type="GO" id="GO:0008770">
    <property type="term" value="F:[acyl-carrier-protein] phosphodiesterase activity"/>
    <property type="evidence" value="ECO:0007669"/>
    <property type="project" value="UniProtKB-UniRule"/>
</dbReference>
<dbReference type="GO" id="GO:0006633">
    <property type="term" value="P:fatty acid biosynthetic process"/>
    <property type="evidence" value="ECO:0007669"/>
    <property type="project" value="UniProtKB-UniRule"/>
</dbReference>
<dbReference type="HAMAP" id="MF_01950">
    <property type="entry name" value="AcpH"/>
    <property type="match status" value="1"/>
</dbReference>
<dbReference type="InterPro" id="IPR007431">
    <property type="entry name" value="ACP_PD"/>
</dbReference>
<dbReference type="InterPro" id="IPR023491">
    <property type="entry name" value="ACP_phosphodiesterase_gpbac"/>
</dbReference>
<dbReference type="NCBIfam" id="NF007466">
    <property type="entry name" value="PRK10045.1"/>
    <property type="match status" value="1"/>
</dbReference>
<dbReference type="PANTHER" id="PTHR38764">
    <property type="entry name" value="ACYL CARRIER PROTEIN PHOSPHODIESTERASE"/>
    <property type="match status" value="1"/>
</dbReference>
<dbReference type="PANTHER" id="PTHR38764:SF1">
    <property type="entry name" value="ACYL CARRIER PROTEIN PHOSPHODIESTERASE"/>
    <property type="match status" value="1"/>
</dbReference>
<dbReference type="Pfam" id="PF04336">
    <property type="entry name" value="ACP_PD"/>
    <property type="match status" value="1"/>
</dbReference>
<dbReference type="PIRSF" id="PIRSF011489">
    <property type="entry name" value="DUF479"/>
    <property type="match status" value="1"/>
</dbReference>
<proteinExistence type="inferred from homology"/>
<reference key="1">
    <citation type="journal article" date="2008" name="Genome Res.">
        <title>Comparative genome analysis of Salmonella enteritidis PT4 and Salmonella gallinarum 287/91 provides insights into evolutionary and host adaptation pathways.</title>
        <authorList>
            <person name="Thomson N.R."/>
            <person name="Clayton D.J."/>
            <person name="Windhorst D."/>
            <person name="Vernikos G."/>
            <person name="Davidson S."/>
            <person name="Churcher C."/>
            <person name="Quail M.A."/>
            <person name="Stevens M."/>
            <person name="Jones M.A."/>
            <person name="Watson M."/>
            <person name="Barron A."/>
            <person name="Layton A."/>
            <person name="Pickard D."/>
            <person name="Kingsley R.A."/>
            <person name="Bignell A."/>
            <person name="Clark L."/>
            <person name="Harris B."/>
            <person name="Ormond D."/>
            <person name="Abdellah Z."/>
            <person name="Brooks K."/>
            <person name="Cherevach I."/>
            <person name="Chillingworth T."/>
            <person name="Woodward J."/>
            <person name="Norberczak H."/>
            <person name="Lord A."/>
            <person name="Arrowsmith C."/>
            <person name="Jagels K."/>
            <person name="Moule S."/>
            <person name="Mungall K."/>
            <person name="Saunders M."/>
            <person name="Whitehead S."/>
            <person name="Chabalgoity J.A."/>
            <person name="Maskell D."/>
            <person name="Humphreys T."/>
            <person name="Roberts M."/>
            <person name="Barrow P.A."/>
            <person name="Dougan G."/>
            <person name="Parkhill J."/>
        </authorList>
    </citation>
    <scope>NUCLEOTIDE SEQUENCE [LARGE SCALE GENOMIC DNA]</scope>
    <source>
        <strain>P125109</strain>
    </source>
</reference>
<evidence type="ECO:0000255" key="1">
    <source>
        <dbReference type="HAMAP-Rule" id="MF_01950"/>
    </source>
</evidence>
<name>ACPH_SALEP</name>
<feature type="chain" id="PRO_1000188812" description="Acyl carrier protein phosphodiesterase">
    <location>
        <begin position="1"/>
        <end position="193"/>
    </location>
</feature>
<accession>B5QTF2</accession>
<organism>
    <name type="scientific">Salmonella enteritidis PT4 (strain P125109)</name>
    <dbReference type="NCBI Taxonomy" id="550537"/>
    <lineage>
        <taxon>Bacteria</taxon>
        <taxon>Pseudomonadati</taxon>
        <taxon>Pseudomonadota</taxon>
        <taxon>Gammaproteobacteria</taxon>
        <taxon>Enterobacterales</taxon>
        <taxon>Enterobacteriaceae</taxon>
        <taxon>Salmonella</taxon>
    </lineage>
</organism>
<sequence>MNFLAHLHLAHLADSSLSGNLLADFVRGNPATHYPPDVVEGIYMHRRIDVMTDNLPEVREAREWFRHETRRVAPITLDVMWDHFLSRHWTQISPDFPLQAFVGYAHAQVATILPDSPPRFVNLNDYLWSEKWLERYRDMDFIQNVLNGMANRRPRLDALRDSWYDLDAHYDALEERFWHFYPRMMAQAARKAL</sequence>
<gene>
    <name evidence="1" type="primary">acpH</name>
    <name type="ordered locus">SEN0386</name>
</gene>
<protein>
    <recommendedName>
        <fullName evidence="1">Acyl carrier protein phosphodiesterase</fullName>
        <shortName evidence="1">ACP phosphodiesterase</shortName>
        <ecNumber evidence="1">3.1.4.14</ecNumber>
    </recommendedName>
</protein>